<gene>
    <name evidence="1" type="primary">rpmA</name>
    <name type="ordered locus">C8J_0088</name>
</gene>
<keyword id="KW-0687">Ribonucleoprotein</keyword>
<keyword id="KW-0689">Ribosomal protein</keyword>
<name>RL27_CAMJ8</name>
<organism>
    <name type="scientific">Campylobacter jejuni subsp. jejuni serotype O:6 (strain 81116 / NCTC 11828)</name>
    <dbReference type="NCBI Taxonomy" id="407148"/>
    <lineage>
        <taxon>Bacteria</taxon>
        <taxon>Pseudomonadati</taxon>
        <taxon>Campylobacterota</taxon>
        <taxon>Epsilonproteobacteria</taxon>
        <taxon>Campylobacterales</taxon>
        <taxon>Campylobacteraceae</taxon>
        <taxon>Campylobacter</taxon>
    </lineage>
</organism>
<evidence type="ECO:0000255" key="1">
    <source>
        <dbReference type="HAMAP-Rule" id="MF_00539"/>
    </source>
</evidence>
<evidence type="ECO:0000305" key="2"/>
<accession>A8FJQ0</accession>
<proteinExistence type="inferred from homology"/>
<feature type="chain" id="PRO_1000072543" description="Large ribosomal subunit protein bL27">
    <location>
        <begin position="1"/>
        <end position="84"/>
    </location>
</feature>
<protein>
    <recommendedName>
        <fullName evidence="1">Large ribosomal subunit protein bL27</fullName>
    </recommendedName>
    <alternativeName>
        <fullName evidence="2">50S ribosomal protein L27</fullName>
    </alternativeName>
</protein>
<comment type="similarity">
    <text evidence="1">Belongs to the bacterial ribosomal protein bL27 family.</text>
</comment>
<sequence>MAHKKGQGSTQNNRDSIGRRLGVKKFGGEFVRAGNIIIRQRGTATHAGNNVGMGKDHTIFALIDGFVKFERKDKDRKKVSVYPA</sequence>
<dbReference type="EMBL" id="CP000814">
    <property type="protein sequence ID" value="ABV51687.1"/>
    <property type="molecule type" value="Genomic_DNA"/>
</dbReference>
<dbReference type="RefSeq" id="WP_002800974.1">
    <property type="nucleotide sequence ID" value="NC_009839.1"/>
</dbReference>
<dbReference type="SMR" id="A8FJQ0"/>
<dbReference type="GeneID" id="98394801"/>
<dbReference type="KEGG" id="cju:C8J_0088"/>
<dbReference type="HOGENOM" id="CLU_095424_4_0_7"/>
<dbReference type="GO" id="GO:0022625">
    <property type="term" value="C:cytosolic large ribosomal subunit"/>
    <property type="evidence" value="ECO:0007669"/>
    <property type="project" value="TreeGrafter"/>
</dbReference>
<dbReference type="GO" id="GO:0003735">
    <property type="term" value="F:structural constituent of ribosome"/>
    <property type="evidence" value="ECO:0007669"/>
    <property type="project" value="InterPro"/>
</dbReference>
<dbReference type="GO" id="GO:0006412">
    <property type="term" value="P:translation"/>
    <property type="evidence" value="ECO:0007669"/>
    <property type="project" value="UniProtKB-UniRule"/>
</dbReference>
<dbReference type="FunFam" id="2.40.50.100:FF:000004">
    <property type="entry name" value="50S ribosomal protein L27"/>
    <property type="match status" value="1"/>
</dbReference>
<dbReference type="Gene3D" id="2.40.50.100">
    <property type="match status" value="1"/>
</dbReference>
<dbReference type="HAMAP" id="MF_00539">
    <property type="entry name" value="Ribosomal_bL27"/>
    <property type="match status" value="1"/>
</dbReference>
<dbReference type="InterPro" id="IPR001684">
    <property type="entry name" value="Ribosomal_bL27"/>
</dbReference>
<dbReference type="InterPro" id="IPR018261">
    <property type="entry name" value="Ribosomal_bL27_CS"/>
</dbReference>
<dbReference type="NCBIfam" id="TIGR00062">
    <property type="entry name" value="L27"/>
    <property type="match status" value="1"/>
</dbReference>
<dbReference type="PANTHER" id="PTHR15893:SF0">
    <property type="entry name" value="LARGE RIBOSOMAL SUBUNIT PROTEIN BL27M"/>
    <property type="match status" value="1"/>
</dbReference>
<dbReference type="PANTHER" id="PTHR15893">
    <property type="entry name" value="RIBOSOMAL PROTEIN L27"/>
    <property type="match status" value="1"/>
</dbReference>
<dbReference type="Pfam" id="PF01016">
    <property type="entry name" value="Ribosomal_L27"/>
    <property type="match status" value="1"/>
</dbReference>
<dbReference type="PRINTS" id="PR00063">
    <property type="entry name" value="RIBOSOMALL27"/>
</dbReference>
<dbReference type="SUPFAM" id="SSF110324">
    <property type="entry name" value="Ribosomal L27 protein-like"/>
    <property type="match status" value="1"/>
</dbReference>
<dbReference type="PROSITE" id="PS00831">
    <property type="entry name" value="RIBOSOMAL_L27"/>
    <property type="match status" value="1"/>
</dbReference>
<reference key="1">
    <citation type="journal article" date="2007" name="J. Bacteriol.">
        <title>The complete genome sequence of Campylobacter jejuni strain 81116 (NCTC11828).</title>
        <authorList>
            <person name="Pearson B.M."/>
            <person name="Gaskin D.J.H."/>
            <person name="Segers R.P.A.M."/>
            <person name="Wells J.M."/>
            <person name="Nuijten P.J.M."/>
            <person name="van Vliet A.H.M."/>
        </authorList>
    </citation>
    <scope>NUCLEOTIDE SEQUENCE [LARGE SCALE GENOMIC DNA]</scope>
    <source>
        <strain>81116 / NCTC 11828</strain>
    </source>
</reference>